<feature type="chain" id="PRO_0000175353" description="DNA-directed RNA polymerase subunit alpha">
    <location>
        <begin position="1"/>
        <end position="329"/>
    </location>
</feature>
<feature type="region of interest" description="Alpha N-terminal domain (alpha-NTD)" evidence="1">
    <location>
        <begin position="1"/>
        <end position="235"/>
    </location>
</feature>
<feature type="region of interest" description="Alpha C-terminal domain (alpha-CTD)" evidence="1">
    <location>
        <begin position="249"/>
        <end position="329"/>
    </location>
</feature>
<comment type="function">
    <text evidence="1">DNA-dependent RNA polymerase catalyzes the transcription of DNA into RNA using the four ribonucleoside triphosphates as substrates.</text>
</comment>
<comment type="catalytic activity">
    <reaction evidence="1">
        <text>RNA(n) + a ribonucleoside 5'-triphosphate = RNA(n+1) + diphosphate</text>
        <dbReference type="Rhea" id="RHEA:21248"/>
        <dbReference type="Rhea" id="RHEA-COMP:14527"/>
        <dbReference type="Rhea" id="RHEA-COMP:17342"/>
        <dbReference type="ChEBI" id="CHEBI:33019"/>
        <dbReference type="ChEBI" id="CHEBI:61557"/>
        <dbReference type="ChEBI" id="CHEBI:140395"/>
        <dbReference type="EC" id="2.7.7.6"/>
    </reaction>
</comment>
<comment type="subunit">
    <text evidence="1">Homodimer. The RNAP catalytic core consists of 2 alpha, 1 beta, 1 beta' and 1 omega subunit. When a sigma factor is associated with the core the holoenzyme is formed, which can initiate transcription.</text>
</comment>
<comment type="domain">
    <text evidence="1">The N-terminal domain is essential for RNAP assembly and basal transcription, whereas the C-terminal domain is involved in interaction with transcriptional regulators and with upstream promoter elements.</text>
</comment>
<comment type="similarity">
    <text evidence="1">Belongs to the RNA polymerase alpha chain family.</text>
</comment>
<evidence type="ECO:0000255" key="1">
    <source>
        <dbReference type="HAMAP-Rule" id="MF_00059"/>
    </source>
</evidence>
<keyword id="KW-0240">DNA-directed RNA polymerase</keyword>
<keyword id="KW-0548">Nucleotidyltransferase</keyword>
<keyword id="KW-1185">Reference proteome</keyword>
<keyword id="KW-0804">Transcription</keyword>
<keyword id="KW-0808">Transferase</keyword>
<organism>
    <name type="scientific">Photobacterium profundum (strain SS9)</name>
    <dbReference type="NCBI Taxonomy" id="298386"/>
    <lineage>
        <taxon>Bacteria</taxon>
        <taxon>Pseudomonadati</taxon>
        <taxon>Pseudomonadota</taxon>
        <taxon>Gammaproteobacteria</taxon>
        <taxon>Vibrionales</taxon>
        <taxon>Vibrionaceae</taxon>
        <taxon>Photobacterium</taxon>
    </lineage>
</organism>
<sequence length="329" mass="36388">MQGSVTEFLKPRLVDIEQVSTTHAKVTLEPLERGFGHTLGNALRRILLSSMPGCAVTEVEIDGVLHEYSTKEGVHEDILEILLNLKGLAIKVEGKDEVILTLNKSGAGPVVAGDITHDGDVEIANPEHVICHLTDDHAEISMRIKVERGRGYVPASARIHTEEDERPIGRLLVDATYSPVDRIAYSVEAARVEQRTDLDKLVIDMETNGTLDPEEAIRRAATILAEQLDAFVDLRDVRVPEEKEEKPEFDPILLRPVDDLELTVRSANCLKAEAIHYIGDLVQRTEVELLKTPNLGKKSLTEIKDVLASRGLSLGMRLENWPPASIAED</sequence>
<gene>
    <name evidence="1" type="primary">rpoA</name>
    <name type="ordered locus">PBPRA0345</name>
</gene>
<reference key="1">
    <citation type="journal article" date="2005" name="Science">
        <title>Life at depth: Photobacterium profundum genome sequence and expression analysis.</title>
        <authorList>
            <person name="Vezzi A."/>
            <person name="Campanaro S."/>
            <person name="D'Angelo M."/>
            <person name="Simonato F."/>
            <person name="Vitulo N."/>
            <person name="Lauro F.M."/>
            <person name="Cestaro A."/>
            <person name="Malacrida G."/>
            <person name="Simionati B."/>
            <person name="Cannata N."/>
            <person name="Romualdi C."/>
            <person name="Bartlett D.H."/>
            <person name="Valle G."/>
        </authorList>
    </citation>
    <scope>NUCLEOTIDE SEQUENCE [LARGE SCALE GENOMIC DNA]</scope>
    <source>
        <strain>ATCC BAA-1253 / SS9</strain>
    </source>
</reference>
<proteinExistence type="inferred from homology"/>
<name>RPOA_PHOPR</name>
<protein>
    <recommendedName>
        <fullName evidence="1">DNA-directed RNA polymerase subunit alpha</fullName>
        <shortName evidence="1">RNAP subunit alpha</shortName>
        <ecNumber evidence="1">2.7.7.6</ecNumber>
    </recommendedName>
    <alternativeName>
        <fullName evidence="1">RNA polymerase subunit alpha</fullName>
    </alternativeName>
    <alternativeName>
        <fullName evidence="1">Transcriptase subunit alpha</fullName>
    </alternativeName>
</protein>
<accession>Q6LV91</accession>
<dbReference type="EC" id="2.7.7.6" evidence="1"/>
<dbReference type="EMBL" id="CR378663">
    <property type="protein sequence ID" value="CAG18784.1"/>
    <property type="molecule type" value="Genomic_DNA"/>
</dbReference>
<dbReference type="RefSeq" id="WP_011217146.1">
    <property type="nucleotide sequence ID" value="NC_006370.1"/>
</dbReference>
<dbReference type="SMR" id="Q6LV91"/>
<dbReference type="STRING" id="298386.PBPRA0345"/>
<dbReference type="KEGG" id="ppr:PBPRA0345"/>
<dbReference type="eggNOG" id="COG0202">
    <property type="taxonomic scope" value="Bacteria"/>
</dbReference>
<dbReference type="HOGENOM" id="CLU_053084_0_0_6"/>
<dbReference type="Proteomes" id="UP000000593">
    <property type="component" value="Chromosome 1"/>
</dbReference>
<dbReference type="GO" id="GO:0005737">
    <property type="term" value="C:cytoplasm"/>
    <property type="evidence" value="ECO:0007669"/>
    <property type="project" value="UniProtKB-ARBA"/>
</dbReference>
<dbReference type="GO" id="GO:0000428">
    <property type="term" value="C:DNA-directed RNA polymerase complex"/>
    <property type="evidence" value="ECO:0007669"/>
    <property type="project" value="UniProtKB-KW"/>
</dbReference>
<dbReference type="GO" id="GO:0003677">
    <property type="term" value="F:DNA binding"/>
    <property type="evidence" value="ECO:0007669"/>
    <property type="project" value="UniProtKB-UniRule"/>
</dbReference>
<dbReference type="GO" id="GO:0003899">
    <property type="term" value="F:DNA-directed RNA polymerase activity"/>
    <property type="evidence" value="ECO:0007669"/>
    <property type="project" value="UniProtKB-UniRule"/>
</dbReference>
<dbReference type="GO" id="GO:0046983">
    <property type="term" value="F:protein dimerization activity"/>
    <property type="evidence" value="ECO:0007669"/>
    <property type="project" value="InterPro"/>
</dbReference>
<dbReference type="GO" id="GO:0006351">
    <property type="term" value="P:DNA-templated transcription"/>
    <property type="evidence" value="ECO:0007669"/>
    <property type="project" value="UniProtKB-UniRule"/>
</dbReference>
<dbReference type="CDD" id="cd06928">
    <property type="entry name" value="RNAP_alpha_NTD"/>
    <property type="match status" value="1"/>
</dbReference>
<dbReference type="FunFam" id="1.10.150.20:FF:000001">
    <property type="entry name" value="DNA-directed RNA polymerase subunit alpha"/>
    <property type="match status" value="1"/>
</dbReference>
<dbReference type="FunFam" id="2.170.120.12:FF:000001">
    <property type="entry name" value="DNA-directed RNA polymerase subunit alpha"/>
    <property type="match status" value="1"/>
</dbReference>
<dbReference type="Gene3D" id="1.10.150.20">
    <property type="entry name" value="5' to 3' exonuclease, C-terminal subdomain"/>
    <property type="match status" value="1"/>
</dbReference>
<dbReference type="Gene3D" id="2.170.120.12">
    <property type="entry name" value="DNA-directed RNA polymerase, insert domain"/>
    <property type="match status" value="1"/>
</dbReference>
<dbReference type="Gene3D" id="3.30.1360.10">
    <property type="entry name" value="RNA polymerase, RBP11-like subunit"/>
    <property type="match status" value="1"/>
</dbReference>
<dbReference type="HAMAP" id="MF_00059">
    <property type="entry name" value="RNApol_bact_RpoA"/>
    <property type="match status" value="1"/>
</dbReference>
<dbReference type="InterPro" id="IPR011262">
    <property type="entry name" value="DNA-dir_RNA_pol_insert"/>
</dbReference>
<dbReference type="InterPro" id="IPR011263">
    <property type="entry name" value="DNA-dir_RNA_pol_RpoA/D/Rpb3"/>
</dbReference>
<dbReference type="InterPro" id="IPR011773">
    <property type="entry name" value="DNA-dir_RpoA"/>
</dbReference>
<dbReference type="InterPro" id="IPR036603">
    <property type="entry name" value="RBP11-like"/>
</dbReference>
<dbReference type="InterPro" id="IPR011260">
    <property type="entry name" value="RNAP_asu_C"/>
</dbReference>
<dbReference type="InterPro" id="IPR036643">
    <property type="entry name" value="RNApol_insert_sf"/>
</dbReference>
<dbReference type="NCBIfam" id="NF003513">
    <property type="entry name" value="PRK05182.1-2"/>
    <property type="match status" value="1"/>
</dbReference>
<dbReference type="NCBIfam" id="NF003519">
    <property type="entry name" value="PRK05182.2-5"/>
    <property type="match status" value="1"/>
</dbReference>
<dbReference type="NCBIfam" id="TIGR02027">
    <property type="entry name" value="rpoA"/>
    <property type="match status" value="1"/>
</dbReference>
<dbReference type="Pfam" id="PF01000">
    <property type="entry name" value="RNA_pol_A_bac"/>
    <property type="match status" value="1"/>
</dbReference>
<dbReference type="Pfam" id="PF03118">
    <property type="entry name" value="RNA_pol_A_CTD"/>
    <property type="match status" value="1"/>
</dbReference>
<dbReference type="Pfam" id="PF01193">
    <property type="entry name" value="RNA_pol_L"/>
    <property type="match status" value="1"/>
</dbReference>
<dbReference type="SMART" id="SM00662">
    <property type="entry name" value="RPOLD"/>
    <property type="match status" value="1"/>
</dbReference>
<dbReference type="SUPFAM" id="SSF47789">
    <property type="entry name" value="C-terminal domain of RNA polymerase alpha subunit"/>
    <property type="match status" value="1"/>
</dbReference>
<dbReference type="SUPFAM" id="SSF56553">
    <property type="entry name" value="Insert subdomain of RNA polymerase alpha subunit"/>
    <property type="match status" value="1"/>
</dbReference>
<dbReference type="SUPFAM" id="SSF55257">
    <property type="entry name" value="RBP11-like subunits of RNA polymerase"/>
    <property type="match status" value="1"/>
</dbReference>